<dbReference type="EC" id="3.2.1.-"/>
<dbReference type="EMBL" id="CP000753">
    <property type="protein sequence ID" value="ABS08947.1"/>
    <property type="molecule type" value="Genomic_DNA"/>
</dbReference>
<dbReference type="RefSeq" id="WP_012089617.1">
    <property type="nucleotide sequence ID" value="NC_009665.1"/>
</dbReference>
<dbReference type="SMR" id="A6WQ58"/>
<dbReference type="CAZy" id="GH109">
    <property type="family name" value="Glycoside Hydrolase Family 109"/>
</dbReference>
<dbReference type="KEGG" id="sbm:Shew185_2813"/>
<dbReference type="HOGENOM" id="CLU_046965_0_0_6"/>
<dbReference type="GO" id="GO:0016798">
    <property type="term" value="F:hydrolase activity, acting on glycosyl bonds"/>
    <property type="evidence" value="ECO:0007669"/>
    <property type="project" value="UniProtKB-KW"/>
</dbReference>
<dbReference type="GO" id="GO:0000166">
    <property type="term" value="F:nucleotide binding"/>
    <property type="evidence" value="ECO:0007669"/>
    <property type="project" value="InterPro"/>
</dbReference>
<dbReference type="Gene3D" id="3.30.360.10">
    <property type="entry name" value="Dihydrodipicolinate Reductase, domain 2"/>
    <property type="match status" value="1"/>
</dbReference>
<dbReference type="Gene3D" id="3.40.50.720">
    <property type="entry name" value="NAD(P)-binding Rossmann-like Domain"/>
    <property type="match status" value="1"/>
</dbReference>
<dbReference type="InterPro" id="IPR000683">
    <property type="entry name" value="Gfo/Idh/MocA-like_OxRdtase_N"/>
</dbReference>
<dbReference type="InterPro" id="IPR050463">
    <property type="entry name" value="Gfo/Idh/MocA_oxidrdct_glycsds"/>
</dbReference>
<dbReference type="InterPro" id="IPR049303">
    <property type="entry name" value="Glyco_hydro_109_C"/>
</dbReference>
<dbReference type="InterPro" id="IPR036291">
    <property type="entry name" value="NAD(P)-bd_dom_sf"/>
</dbReference>
<dbReference type="InterPro" id="IPR006311">
    <property type="entry name" value="TAT_signal"/>
</dbReference>
<dbReference type="InterPro" id="IPR019546">
    <property type="entry name" value="TAT_signal_bac_arc"/>
</dbReference>
<dbReference type="NCBIfam" id="TIGR01409">
    <property type="entry name" value="TAT_signal_seq"/>
    <property type="match status" value="1"/>
</dbReference>
<dbReference type="PANTHER" id="PTHR43818">
    <property type="entry name" value="BCDNA.GH03377"/>
    <property type="match status" value="1"/>
</dbReference>
<dbReference type="PANTHER" id="PTHR43818:SF1">
    <property type="entry name" value="GLYCOSYL HYDROLASE FAMILY 109 PROTEIN"/>
    <property type="match status" value="1"/>
</dbReference>
<dbReference type="Pfam" id="PF01408">
    <property type="entry name" value="GFO_IDH_MocA"/>
    <property type="match status" value="1"/>
</dbReference>
<dbReference type="Pfam" id="PF21252">
    <property type="entry name" value="Glyco_hydro_109_C"/>
    <property type="match status" value="1"/>
</dbReference>
<dbReference type="Pfam" id="PF10518">
    <property type="entry name" value="TAT_signal"/>
    <property type="match status" value="1"/>
</dbReference>
<dbReference type="SUPFAM" id="SSF51735">
    <property type="entry name" value="NAD(P)-binding Rossmann-fold domains"/>
    <property type="match status" value="1"/>
</dbReference>
<dbReference type="PROSITE" id="PS51318">
    <property type="entry name" value="TAT"/>
    <property type="match status" value="1"/>
</dbReference>
<accession>A6WQ58</accession>
<organism>
    <name type="scientific">Shewanella baltica (strain OS185)</name>
    <dbReference type="NCBI Taxonomy" id="402882"/>
    <lineage>
        <taxon>Bacteria</taxon>
        <taxon>Pseudomonadati</taxon>
        <taxon>Pseudomonadota</taxon>
        <taxon>Gammaproteobacteria</taxon>
        <taxon>Alteromonadales</taxon>
        <taxon>Shewanellaceae</taxon>
        <taxon>Shewanella</taxon>
    </lineage>
</organism>
<keyword id="KW-0326">Glycosidase</keyword>
<keyword id="KW-0378">Hydrolase</keyword>
<keyword id="KW-0520">NAD</keyword>
<keyword id="KW-0732">Signal</keyword>
<evidence type="ECO:0000250" key="1"/>
<evidence type="ECO:0000255" key="2">
    <source>
        <dbReference type="PROSITE-ProRule" id="PRU00648"/>
    </source>
</evidence>
<evidence type="ECO:0000305" key="3"/>
<sequence length="459" mass="51910">MHNIHRRNFLKAAGAATAGLVTANIALSAYASSVAPKPQAGKSVIGLIAPKMDVVRVGFIGVGERGFSHVEQFCHLEGVELKAICDTHQAVLDRAVDHIVKQNRPKPAVYTGNDLSYRDLLSRDDIDIVIISTPWEWHAPMAIETMESGKHAFVEVPMALTVEECWQVVDTAERTQKNCMMMENVNYGREELMVLNMVRQGVFGELLHGEAAYIHELRWQMKEIDHKTGSWRTYWHTKRNGNLYPTHGLGPVSQYMNINRGDRFDYLTSMSSPALGRALYAKREFPADHERNQLKYINGDINTSLIKTVKGRTIMVQHDTTTPRPYSRHNLIQGTNGVFAGFPNRIAVENGGFGQSYHEWDMDMQKWYDKYDHPLWQRIGKEAEINGGHGGMDFVMLWRMIYCLRNGETLDQDVYDGASWSVVNILSEHSLNDRSNSVTFPDFTRGAWQTAKPLGIIGA</sequence>
<feature type="signal peptide" description="Tat-type signal" evidence="2">
    <location>
        <begin position="1"/>
        <end position="31"/>
    </location>
</feature>
<feature type="chain" id="PRO_5000260970" description="Glycosyl hydrolase family 109 protein">
    <location>
        <begin position="32"/>
        <end position="459"/>
    </location>
</feature>
<feature type="binding site" evidence="1">
    <location>
        <begin position="64"/>
        <end position="65"/>
    </location>
    <ligand>
        <name>NAD(+)</name>
        <dbReference type="ChEBI" id="CHEBI:57540"/>
    </ligand>
</feature>
<feature type="binding site" evidence="1">
    <location>
        <position position="86"/>
    </location>
    <ligand>
        <name>NAD(+)</name>
        <dbReference type="ChEBI" id="CHEBI:57540"/>
    </ligand>
</feature>
<feature type="binding site" evidence="1">
    <location>
        <begin position="135"/>
        <end position="138"/>
    </location>
    <ligand>
        <name>NAD(+)</name>
        <dbReference type="ChEBI" id="CHEBI:57540"/>
    </ligand>
</feature>
<feature type="binding site" evidence="1">
    <location>
        <begin position="155"/>
        <end position="156"/>
    </location>
    <ligand>
        <name>NAD(+)</name>
        <dbReference type="ChEBI" id="CHEBI:57540"/>
    </ligand>
</feature>
<feature type="binding site" evidence="1">
    <location>
        <position position="184"/>
    </location>
    <ligand>
        <name>NAD(+)</name>
        <dbReference type="ChEBI" id="CHEBI:57540"/>
    </ligand>
</feature>
<feature type="binding site" evidence="1">
    <location>
        <position position="213"/>
    </location>
    <ligand>
        <name>substrate</name>
    </ligand>
</feature>
<feature type="binding site" evidence="1">
    <location>
        <position position="232"/>
    </location>
    <ligand>
        <name>substrate</name>
    </ligand>
</feature>
<feature type="binding site" evidence="1">
    <location>
        <begin position="244"/>
        <end position="247"/>
    </location>
    <ligand>
        <name>substrate</name>
    </ligand>
</feature>
<feature type="binding site" evidence="1">
    <location>
        <position position="244"/>
    </location>
    <ligand>
        <name>NAD(+)</name>
        <dbReference type="ChEBI" id="CHEBI:57540"/>
    </ligand>
</feature>
<feature type="binding site" evidence="1">
    <location>
        <position position="326"/>
    </location>
    <ligand>
        <name>substrate</name>
    </ligand>
</feature>
<gene>
    <name type="ordered locus">Shew185_2813</name>
</gene>
<protein>
    <recommendedName>
        <fullName>Glycosyl hydrolase family 109 protein</fullName>
        <ecNumber>3.2.1.-</ecNumber>
    </recommendedName>
</protein>
<proteinExistence type="inferred from homology"/>
<comment type="function">
    <text evidence="1">Glycosidase.</text>
</comment>
<comment type="cofactor">
    <cofactor evidence="1">
        <name>NAD(+)</name>
        <dbReference type="ChEBI" id="CHEBI:57540"/>
    </cofactor>
    <text evidence="1">Binds 1 NAD(+) per subunit. The NAD(+) cannot dissociate.</text>
</comment>
<comment type="PTM">
    <text>Predicted to be exported by the Tat system. The position of the signal peptide cleavage has not been experimentally proven.</text>
</comment>
<comment type="similarity">
    <text evidence="3">Belongs to the Gfo/Idh/MocA family. Glycosyl hydrolase 109 subfamily.</text>
</comment>
<reference key="1">
    <citation type="submission" date="2007-07" db="EMBL/GenBank/DDBJ databases">
        <title>Complete sequence of chromosome of Shewanella baltica OS185.</title>
        <authorList>
            <consortium name="US DOE Joint Genome Institute"/>
            <person name="Copeland A."/>
            <person name="Lucas S."/>
            <person name="Lapidus A."/>
            <person name="Barry K."/>
            <person name="Glavina del Rio T."/>
            <person name="Dalin E."/>
            <person name="Tice H."/>
            <person name="Pitluck S."/>
            <person name="Sims D."/>
            <person name="Brettin T."/>
            <person name="Bruce D."/>
            <person name="Detter J.C."/>
            <person name="Han C."/>
            <person name="Schmutz J."/>
            <person name="Larimer F."/>
            <person name="Land M."/>
            <person name="Hauser L."/>
            <person name="Kyrpides N."/>
            <person name="Mikhailova N."/>
            <person name="Brettar I."/>
            <person name="Rodrigues J."/>
            <person name="Konstantinidis K."/>
            <person name="Tiedje J."/>
            <person name="Richardson P."/>
        </authorList>
    </citation>
    <scope>NUCLEOTIDE SEQUENCE [LARGE SCALE GENOMIC DNA]</scope>
    <source>
        <strain>OS185</strain>
    </source>
</reference>
<name>GH109_SHEB8</name>